<feature type="chain" id="PRO_0000056012" description="V(D)J recombination-activating protein 1">
    <location>
        <begin position="1"/>
        <end position="1045"/>
    </location>
</feature>
<feature type="zinc finger region" description="RING-type" evidence="2">
    <location>
        <begin position="294"/>
        <end position="333"/>
    </location>
</feature>
<feature type="zinc finger region" description="RAG1-type" evidence="4">
    <location>
        <begin position="355"/>
        <end position="384"/>
    </location>
</feature>
<feature type="DNA-binding region" description="NBD" evidence="3">
    <location>
        <begin position="395"/>
        <end position="462"/>
    </location>
</feature>
<feature type="region of interest" description="Disordered" evidence="5">
    <location>
        <begin position="33"/>
        <end position="55"/>
    </location>
</feature>
<feature type="region of interest" description="Disordered" evidence="5">
    <location>
        <begin position="67"/>
        <end position="87"/>
    </location>
</feature>
<feature type="region of interest" description="Disordered" evidence="5">
    <location>
        <begin position="222"/>
        <end position="253"/>
    </location>
</feature>
<feature type="compositionally biased region" description="Polar residues" evidence="5">
    <location>
        <begin position="44"/>
        <end position="55"/>
    </location>
</feature>
<feature type="compositionally biased region" description="Polar residues" evidence="5">
    <location>
        <begin position="69"/>
        <end position="87"/>
    </location>
</feature>
<feature type="binding site" evidence="1">
    <location>
        <position position="270"/>
    </location>
    <ligand>
        <name>Zn(2+)</name>
        <dbReference type="ChEBI" id="CHEBI:29105"/>
        <label>1</label>
    </ligand>
</feature>
<feature type="binding site" evidence="1">
    <location>
        <position position="274"/>
    </location>
    <ligand>
        <name>Zn(2+)</name>
        <dbReference type="ChEBI" id="CHEBI:29105"/>
        <label>1</label>
    </ligand>
</feature>
<feature type="binding site" evidence="1">
    <location>
        <position position="294"/>
    </location>
    <ligand>
        <name>Zn(2+)</name>
        <dbReference type="ChEBI" id="CHEBI:29105"/>
        <label>2</label>
    </ligand>
</feature>
<feature type="binding site" evidence="1">
    <location>
        <position position="297"/>
    </location>
    <ligand>
        <name>Zn(2+)</name>
        <dbReference type="ChEBI" id="CHEBI:29105"/>
        <label>1</label>
    </ligand>
</feature>
<feature type="binding site" evidence="1">
    <location>
        <position position="297"/>
    </location>
    <ligand>
        <name>Zn(2+)</name>
        <dbReference type="ChEBI" id="CHEBI:29105"/>
        <label>2</label>
    </ligand>
</feature>
<feature type="binding site" evidence="1">
    <location>
        <position position="299"/>
    </location>
    <ligand>
        <name>Zn(2+)</name>
        <dbReference type="ChEBI" id="CHEBI:29105"/>
        <label>1</label>
    </ligand>
</feature>
<feature type="binding site" evidence="1">
    <location>
        <position position="309"/>
    </location>
    <ligand>
        <name>Zn(2+)</name>
        <dbReference type="ChEBI" id="CHEBI:29105"/>
        <label>3</label>
    </ligand>
</feature>
<feature type="binding site" evidence="1">
    <location>
        <position position="311"/>
    </location>
    <ligand>
        <name>Zn(2+)</name>
        <dbReference type="ChEBI" id="CHEBI:29105"/>
        <label>3</label>
    </ligand>
</feature>
<feature type="binding site" evidence="1">
    <location>
        <position position="314"/>
    </location>
    <ligand>
        <name>Zn(2+)</name>
        <dbReference type="ChEBI" id="CHEBI:29105"/>
        <label>2</label>
    </ligand>
</feature>
<feature type="binding site" evidence="1">
    <location>
        <position position="317"/>
    </location>
    <ligand>
        <name>Zn(2+)</name>
        <dbReference type="ChEBI" id="CHEBI:29105"/>
        <label>2</label>
    </ligand>
</feature>
<feature type="binding site" evidence="1">
    <location>
        <position position="329"/>
    </location>
    <ligand>
        <name>Zn(2+)</name>
        <dbReference type="ChEBI" id="CHEBI:29105"/>
        <label>3</label>
    </ligand>
</feature>
<feature type="binding site" evidence="1">
    <location>
        <position position="332"/>
    </location>
    <ligand>
        <name>Zn(2+)</name>
        <dbReference type="ChEBI" id="CHEBI:29105"/>
        <label>3</label>
    </ligand>
</feature>
<feature type="binding site" evidence="4">
    <location>
        <position position="359"/>
    </location>
    <ligand>
        <name>Zn(2+)</name>
        <dbReference type="ChEBI" id="CHEBI:29105"/>
        <label>4</label>
    </ligand>
</feature>
<feature type="binding site" evidence="4">
    <location>
        <position position="364"/>
    </location>
    <ligand>
        <name>Zn(2+)</name>
        <dbReference type="ChEBI" id="CHEBI:29105"/>
        <label>4</label>
    </ligand>
</feature>
<feature type="binding site" evidence="4">
    <location>
        <position position="376"/>
    </location>
    <ligand>
        <name>Zn(2+)</name>
        <dbReference type="ChEBI" id="CHEBI:29105"/>
        <label>4</label>
    </ligand>
</feature>
<feature type="binding site" evidence="4">
    <location>
        <position position="380"/>
    </location>
    <ligand>
        <name>Zn(2+)</name>
        <dbReference type="ChEBI" id="CHEBI:29105"/>
        <label>4</label>
    </ligand>
</feature>
<feature type="binding site" evidence="1">
    <location>
        <position position="606"/>
    </location>
    <ligand>
        <name>a divalent metal cation</name>
        <dbReference type="ChEBI" id="CHEBI:60240"/>
        <note>catalytic</note>
    </ligand>
</feature>
<feature type="binding site" evidence="1">
    <location>
        <position position="714"/>
    </location>
    <ligand>
        <name>a divalent metal cation</name>
        <dbReference type="ChEBI" id="CHEBI:60240"/>
        <note>catalytic</note>
    </ligand>
</feature>
<feature type="binding site" evidence="1">
    <location>
        <position position="968"/>
    </location>
    <ligand>
        <name>a divalent metal cation</name>
        <dbReference type="ChEBI" id="CHEBI:60240"/>
        <note>catalytic</note>
    </ligand>
</feature>
<feature type="site" description="Essential for DNA hairpin formation, participates in base-stacking interactions near the cleavage site" evidence="1">
    <location>
        <position position="899"/>
    </location>
</feature>
<accession>Q91829</accession>
<proteinExistence type="evidence at transcript level"/>
<dbReference type="EC" id="3.1.-.-"/>
<dbReference type="EC" id="2.3.2.27"/>
<dbReference type="EMBL" id="L19324">
    <property type="protein sequence ID" value="AAA03068.1"/>
    <property type="molecule type" value="Genomic_DNA"/>
</dbReference>
<dbReference type="PIR" id="I51555">
    <property type="entry name" value="I51555"/>
</dbReference>
<dbReference type="RefSeq" id="NP_001165554.1">
    <property type="nucleotide sequence ID" value="NM_001172083.1"/>
</dbReference>
<dbReference type="SMR" id="Q91829"/>
<dbReference type="GeneID" id="100337558"/>
<dbReference type="KEGG" id="xla:100337558"/>
<dbReference type="AGR" id="Xenbase:XB-GENE-17346869"/>
<dbReference type="CTD" id="100337558"/>
<dbReference type="Xenbase" id="XB-GENE-17346869">
    <property type="gene designation" value="rag1.S"/>
</dbReference>
<dbReference type="OrthoDB" id="6270329at2759"/>
<dbReference type="Proteomes" id="UP000186698">
    <property type="component" value="Chromosome 4S"/>
</dbReference>
<dbReference type="Bgee" id="100337558">
    <property type="expression patterns" value="Expressed in spleen"/>
</dbReference>
<dbReference type="GO" id="GO:0097519">
    <property type="term" value="C:DNA recombinase complex"/>
    <property type="evidence" value="ECO:0000318"/>
    <property type="project" value="GO_Central"/>
</dbReference>
<dbReference type="GO" id="GO:1905347">
    <property type="term" value="C:endodeoxyribonuclease complex"/>
    <property type="evidence" value="ECO:0000318"/>
    <property type="project" value="GO_Central"/>
</dbReference>
<dbReference type="GO" id="GO:0005634">
    <property type="term" value="C:nucleus"/>
    <property type="evidence" value="ECO:0000250"/>
    <property type="project" value="UniProtKB"/>
</dbReference>
<dbReference type="GO" id="GO:1990238">
    <property type="term" value="F:double-stranded DNA endonuclease activity"/>
    <property type="evidence" value="ECO:0007669"/>
    <property type="project" value="TreeGrafter"/>
</dbReference>
<dbReference type="GO" id="GO:0004519">
    <property type="term" value="F:endonuclease activity"/>
    <property type="evidence" value="ECO:0000250"/>
    <property type="project" value="UniProtKB"/>
</dbReference>
<dbReference type="GO" id="GO:0042393">
    <property type="term" value="F:histone binding"/>
    <property type="evidence" value="ECO:0000250"/>
    <property type="project" value="UniProtKB"/>
</dbReference>
<dbReference type="GO" id="GO:0046872">
    <property type="term" value="F:metal ion binding"/>
    <property type="evidence" value="ECO:0000250"/>
    <property type="project" value="UniProtKB"/>
</dbReference>
<dbReference type="GO" id="GO:0042803">
    <property type="term" value="F:protein homodimerization activity"/>
    <property type="evidence" value="ECO:0000250"/>
    <property type="project" value="UniProtKB"/>
</dbReference>
<dbReference type="GO" id="GO:0043565">
    <property type="term" value="F:sequence-specific DNA binding"/>
    <property type="evidence" value="ECO:0000250"/>
    <property type="project" value="UniProtKB"/>
</dbReference>
<dbReference type="GO" id="GO:0061630">
    <property type="term" value="F:ubiquitin protein ligase activity"/>
    <property type="evidence" value="ECO:0000318"/>
    <property type="project" value="GO_Central"/>
</dbReference>
<dbReference type="GO" id="GO:0004842">
    <property type="term" value="F:ubiquitin-protein transferase activity"/>
    <property type="evidence" value="ECO:0000250"/>
    <property type="project" value="UniProtKB"/>
</dbReference>
<dbReference type="GO" id="GO:0008270">
    <property type="term" value="F:zinc ion binding"/>
    <property type="evidence" value="ECO:0000250"/>
    <property type="project" value="UniProtKB"/>
</dbReference>
<dbReference type="GO" id="GO:0002250">
    <property type="term" value="P:adaptive immune response"/>
    <property type="evidence" value="ECO:0000318"/>
    <property type="project" value="GO_Central"/>
</dbReference>
<dbReference type="GO" id="GO:0030183">
    <property type="term" value="P:B cell differentiation"/>
    <property type="evidence" value="ECO:0000250"/>
    <property type="project" value="UniProtKB"/>
</dbReference>
<dbReference type="GO" id="GO:0006325">
    <property type="term" value="P:chromatin organization"/>
    <property type="evidence" value="ECO:0007669"/>
    <property type="project" value="UniProtKB-KW"/>
</dbReference>
<dbReference type="GO" id="GO:0033077">
    <property type="term" value="P:T cell differentiation in thymus"/>
    <property type="evidence" value="ECO:0000250"/>
    <property type="project" value="UniProtKB"/>
</dbReference>
<dbReference type="GO" id="GO:0033151">
    <property type="term" value="P:V(D)J recombination"/>
    <property type="evidence" value="ECO:0000250"/>
    <property type="project" value="UniProtKB"/>
</dbReference>
<dbReference type="CDD" id="cd16530">
    <property type="entry name" value="RING-HC_RAG1"/>
    <property type="match status" value="1"/>
</dbReference>
<dbReference type="FunFam" id="3.30.40.10:FF:000142">
    <property type="entry name" value="Recombination activating gene 1"/>
    <property type="match status" value="1"/>
</dbReference>
<dbReference type="Gene3D" id="6.10.140.510">
    <property type="match status" value="1"/>
</dbReference>
<dbReference type="Gene3D" id="3.30.160.60">
    <property type="entry name" value="Classic Zinc Finger"/>
    <property type="match status" value="1"/>
</dbReference>
<dbReference type="Gene3D" id="3.30.40.10">
    <property type="entry name" value="Zinc/RING finger domain, C3HC4 (zinc finger)"/>
    <property type="match status" value="1"/>
</dbReference>
<dbReference type="InterPro" id="IPR024627">
    <property type="entry name" value="RAG1"/>
</dbReference>
<dbReference type="InterPro" id="IPR035714">
    <property type="entry name" value="RAG1_imp-bd"/>
</dbReference>
<dbReference type="InterPro" id="IPR019485">
    <property type="entry name" value="RAG1_Znf"/>
</dbReference>
<dbReference type="InterPro" id="IPR023336">
    <property type="entry name" value="RAG_nonamer-bd_dom"/>
</dbReference>
<dbReference type="InterPro" id="IPR036236">
    <property type="entry name" value="Znf_C2H2_sf"/>
</dbReference>
<dbReference type="InterPro" id="IPR018957">
    <property type="entry name" value="Znf_C3HC4_RING-type"/>
</dbReference>
<dbReference type="InterPro" id="IPR001841">
    <property type="entry name" value="Znf_RING"/>
</dbReference>
<dbReference type="InterPro" id="IPR013083">
    <property type="entry name" value="Znf_RING/FYVE/PHD"/>
</dbReference>
<dbReference type="InterPro" id="IPR017907">
    <property type="entry name" value="Znf_RING_CS"/>
</dbReference>
<dbReference type="PANTHER" id="PTHR11539:SF0">
    <property type="entry name" value="V(D)J RECOMBINATION-ACTIVATING PROTEIN 1"/>
    <property type="match status" value="1"/>
</dbReference>
<dbReference type="PANTHER" id="PTHR11539">
    <property type="entry name" value="VDJ RECOMBINATION ACTIVATING PROTEIN 1 RAG1"/>
    <property type="match status" value="1"/>
</dbReference>
<dbReference type="Pfam" id="PF12940">
    <property type="entry name" value="RAG1"/>
    <property type="match status" value="1"/>
</dbReference>
<dbReference type="Pfam" id="PF12560">
    <property type="entry name" value="RAG1_imp_bd"/>
    <property type="match status" value="1"/>
</dbReference>
<dbReference type="Pfam" id="PF00097">
    <property type="entry name" value="zf-C3HC4"/>
    <property type="match status" value="1"/>
</dbReference>
<dbReference type="Pfam" id="PF10426">
    <property type="entry name" value="zf-RAG1"/>
    <property type="match status" value="1"/>
</dbReference>
<dbReference type="SUPFAM" id="SSF57667">
    <property type="entry name" value="beta-beta-alpha zinc fingers"/>
    <property type="match status" value="1"/>
</dbReference>
<dbReference type="SUPFAM" id="SSF57850">
    <property type="entry name" value="RING/U-box"/>
    <property type="match status" value="1"/>
</dbReference>
<dbReference type="PROSITE" id="PS51487">
    <property type="entry name" value="NBD"/>
    <property type="match status" value="1"/>
</dbReference>
<dbReference type="PROSITE" id="PS51765">
    <property type="entry name" value="ZF_RAG1"/>
    <property type="match status" value="1"/>
</dbReference>
<dbReference type="PROSITE" id="PS00518">
    <property type="entry name" value="ZF_RING_1"/>
    <property type="match status" value="1"/>
</dbReference>
<dbReference type="PROSITE" id="PS50089">
    <property type="entry name" value="ZF_RING_2"/>
    <property type="match status" value="1"/>
</dbReference>
<evidence type="ECO:0000250" key="1"/>
<evidence type="ECO:0000255" key="2">
    <source>
        <dbReference type="PROSITE-ProRule" id="PRU00175"/>
    </source>
</evidence>
<evidence type="ECO:0000255" key="3">
    <source>
        <dbReference type="PROSITE-ProRule" id="PRU00820"/>
    </source>
</evidence>
<evidence type="ECO:0000255" key="4">
    <source>
        <dbReference type="PROSITE-ProRule" id="PRU01101"/>
    </source>
</evidence>
<evidence type="ECO:0000256" key="5">
    <source>
        <dbReference type="SAM" id="MobiDB-lite"/>
    </source>
</evidence>
<evidence type="ECO:0000305" key="6"/>
<sequence>MEVALPNVPTKMQHPFTKYSEWKFKLFRVKSLERRPSEEETEGSEVSYNSSQETYPKSTVVLEDLSLGSAPQSPTNFKPQQSEKSNVVDNHETDLKRLEEEAHITVIQQLCRICGASFKMDQQNRSYPVHGPVDSETHDILRRREKKVTSWPELISKVFKTDVRADVDTIHPTQFCHNCWTIMNQKFSNISSEVYFPHNQAVEWTPHSANCYVCHSSKPWGKRKSAPQLNPHKMKKRKRGPEFVKKSKTSSGNSIQWKNMKAFNQMKDSCKKIHLDNNLLVLDYPSDFVKSVSCLVCEHILSDPVQTSCKHLFCRICILKYIKLMGCYCPSCKYPCFPTDLTVPVKSYLNVLNALLLKCTVSGCDEEISLGKYSHHISKHKETKGKEVYAHINKGGRPRQHLLTLTRRAQKHRLRELKMQVKAFADKEEEGDVKSVCLTLFLLALRARNEHRQADELEAIMEGRGAGLHPAVCLAIRVNTFLSCSQYHKMYRTVKATTGRQIFQPLHALRNAEKALIPGYHTFEWRPPLKNVSTRTDVGIIDGLSGLNQSLDEYPVDTISKRFRYDAALVSALKDMEEDILEGLKAQDLDDYVSGPFTVVVKESCDGMGDVSEKHGSGPPVPEKAVRFSFTVMNISVPNKNGPVRIFEETKPNSELCCKPLCLMLADESDHETLTAILSPLIAEREAMKTAELLLEMGGILRNFKFSFRGTGYDEKLVREVEGLEASGSLYICTLCDATRLEAAQNLVNHSITRSHCENLQRYEMWRSNPHHESPDELRDRVKGVSAKPFIETLPSIDALHCDIGNAAEFYRIFQLEIGELYKNLSATKEEKKRWQATLDNHIRKRMNLKPIMRMNGNFARKLMSKETVEAVCELVPCEERQAALTELMDLYLKMKPVWRSSCPAKECPELLCQYSFHSQRFAELLSTKFKYRYEGKITNYFHKTLAHVPEIIERDGSIGAWASEGNESGNKLFRRFRKMNARQSKFYEMEDVLKHHWLYTSKYLQKFMNAHNNLKNQGFTVDLDNPDLEQRLESSMESLESMEF</sequence>
<comment type="function">
    <text evidence="1">Catalytic component of the RAG complex, a multiprotein complex that mediates the DNA cleavage phase during V(D)J recombination. V(D)J recombination assembles a diverse repertoire of immunoglobulin and T-cell receptor genes in developing B and T lymphocytes through rearrangement of different V (variable), in some cases D (diversity), and J (joining) gene segments. In the RAG complex, RAG1 mediates the DNA-binding to the conserved recombination signal sequences (RSS) and catalyzes the DNA cleavage activities by introducing a double-strand break between the RSS and the adjacent coding segment. RAG2 is not a catalytic component but is required for all known catalytic activities. DNA cleavage occurs in 2 steps: a first nick is introduced in the top strand immediately upstream of the heptamer, generating a 3'-hydroxyl group that can attack the phosphodiester bond on the opposite strand in a direct transesterification reaction, thereby creating 4 DNA ends: 2 hairpin coding ends and 2 blunt, 5'-phosphorylated ends. In addition to its endonuclease activity, RAG1 also acts as an E3 ubiquitin-protein ligase that mediates monoubiquitination of histone H3. Histone H3 monoubiquitination is required for the joining step of V(D)J recombination (By similarity).</text>
</comment>
<comment type="catalytic activity">
    <reaction>
        <text>S-ubiquitinyl-[E2 ubiquitin-conjugating enzyme]-L-cysteine + [acceptor protein]-L-lysine = [E2 ubiquitin-conjugating enzyme]-L-cysteine + N(6)-ubiquitinyl-[acceptor protein]-L-lysine.</text>
        <dbReference type="EC" id="2.3.2.27"/>
    </reaction>
</comment>
<comment type="cofactor">
    <cofactor evidence="1">
        <name>Mg(2+)</name>
        <dbReference type="ChEBI" id="CHEBI:18420"/>
    </cofactor>
    <cofactor evidence="1">
        <name>Mn(2+)</name>
        <dbReference type="ChEBI" id="CHEBI:29035"/>
    </cofactor>
    <text evidence="1">Binds 1 divalent metal cation per subunit. Mg(2+) or Mn(2+).</text>
</comment>
<comment type="subunit">
    <text evidence="1">Homodimer. Component of the RAG complex composed of core components rag1 and rag2 (By similarity).</text>
</comment>
<comment type="subcellular location">
    <subcellularLocation>
        <location evidence="3">Nucleus</location>
    </subcellularLocation>
</comment>
<comment type="tissue specificity">
    <text>Expressed within the thymus, liver and spleen in juvenile frogs, and within the thymus and bone marrow of adults.</text>
</comment>
<comment type="domain">
    <text evidence="1">The RING-type zinc finger mediates the E3 ubiquitin-protein ligase activity.</text>
</comment>
<comment type="domain">
    <text evidence="3">The NBD (nonamer binding) DNA-binding domain mediates the specific binding to the nonamer RSS motif by forming a tightly interwoven homodimer that binds and synapses 2 nonamer elements, with each NBD making contact with both DNA molecules. Each RSS is composed of well-conserved heptamer (consensus 5'-CACAGTG-3') and nonamer (consensus 5'-ACAAAAACC-3') sequences separated by a spacer of either 12 bp or 23 bp.</text>
</comment>
<comment type="similarity">
    <text evidence="3">Belongs to the RAG1 family.</text>
</comment>
<organism>
    <name type="scientific">Xenopus laevis</name>
    <name type="common">African clawed frog</name>
    <dbReference type="NCBI Taxonomy" id="8355"/>
    <lineage>
        <taxon>Eukaryota</taxon>
        <taxon>Metazoa</taxon>
        <taxon>Chordata</taxon>
        <taxon>Craniata</taxon>
        <taxon>Vertebrata</taxon>
        <taxon>Euteleostomi</taxon>
        <taxon>Amphibia</taxon>
        <taxon>Batrachia</taxon>
        <taxon>Anura</taxon>
        <taxon>Pipoidea</taxon>
        <taxon>Pipidae</taxon>
        <taxon>Xenopodinae</taxon>
        <taxon>Xenopus</taxon>
        <taxon>Xenopus</taxon>
    </lineage>
</organism>
<keyword id="KW-0156">Chromatin regulator</keyword>
<keyword id="KW-0233">DNA recombination</keyword>
<keyword id="KW-0238">DNA-binding</keyword>
<keyword id="KW-0255">Endonuclease</keyword>
<keyword id="KW-0378">Hydrolase</keyword>
<keyword id="KW-0479">Metal-binding</keyword>
<keyword id="KW-0511">Multifunctional enzyme</keyword>
<keyword id="KW-0540">Nuclease</keyword>
<keyword id="KW-0539">Nucleus</keyword>
<keyword id="KW-1185">Reference proteome</keyword>
<keyword id="KW-0808">Transferase</keyword>
<keyword id="KW-0833">Ubl conjugation pathway</keyword>
<keyword id="KW-0862">Zinc</keyword>
<keyword id="KW-0863">Zinc-finger</keyword>
<name>RAG1_XENLA</name>
<gene>
    <name type="primary">rag1</name>
</gene>
<protein>
    <recommendedName>
        <fullName>V(D)J recombination-activating protein 1</fullName>
        <shortName>RAG-1</shortName>
    </recommendedName>
    <domain>
        <recommendedName>
            <fullName>Endonuclease RAG1</fullName>
            <ecNumber>3.1.-.-</ecNumber>
        </recommendedName>
    </domain>
    <domain>
        <recommendedName>
            <fullName>E3 ubiquitin-protein ligase RAG1</fullName>
            <ecNumber>2.3.2.27</ecNumber>
        </recommendedName>
        <alternativeName>
            <fullName evidence="6">RING-type E3 ubiquitin transferase RAG1</fullName>
        </alternativeName>
    </domain>
</protein>
<reference key="1">
    <citation type="journal article" date="1993" name="J. Immunol.">
        <title>Characterization and expression of recombination activating genes (RAG-1 and RAG-2) in Xenopus laevis.</title>
        <authorList>
            <person name="Greenhalgh P.H."/>
            <person name="Olesen C.E."/>
            <person name="Steiner L.A."/>
        </authorList>
    </citation>
    <scope>NUCLEOTIDE SEQUENCE [GENOMIC DNA]</scope>
    <source>
        <strain>HD-1</strain>
    </source>
</reference>